<dbReference type="EC" id="2.4.1.21" evidence="1"/>
<dbReference type="EMBL" id="FM211187">
    <property type="protein sequence ID" value="CAR68863.1"/>
    <property type="molecule type" value="Genomic_DNA"/>
</dbReference>
<dbReference type="RefSeq" id="WP_000697292.1">
    <property type="nucleotide sequence ID" value="NC_011900.1"/>
</dbReference>
<dbReference type="SMR" id="B8ZPW5"/>
<dbReference type="CAZy" id="GT5">
    <property type="family name" value="Glycosyltransferase Family 5"/>
</dbReference>
<dbReference type="KEGG" id="sne:SPN23F10440"/>
<dbReference type="HOGENOM" id="CLU_009583_18_2_9"/>
<dbReference type="UniPathway" id="UPA00164"/>
<dbReference type="GO" id="GO:0009011">
    <property type="term" value="F:alpha-1,4-glucan glucosyltransferase (ADP-glucose donor) activity"/>
    <property type="evidence" value="ECO:0007669"/>
    <property type="project" value="UniProtKB-UniRule"/>
</dbReference>
<dbReference type="GO" id="GO:0004373">
    <property type="term" value="F:alpha-1,4-glucan glucosyltransferase (UDP-glucose donor) activity"/>
    <property type="evidence" value="ECO:0007669"/>
    <property type="project" value="InterPro"/>
</dbReference>
<dbReference type="GO" id="GO:0005978">
    <property type="term" value="P:glycogen biosynthetic process"/>
    <property type="evidence" value="ECO:0007669"/>
    <property type="project" value="UniProtKB-UniRule"/>
</dbReference>
<dbReference type="CDD" id="cd03791">
    <property type="entry name" value="GT5_Glycogen_synthase_DULL1-like"/>
    <property type="match status" value="1"/>
</dbReference>
<dbReference type="Gene3D" id="3.40.50.2000">
    <property type="entry name" value="Glycogen Phosphorylase B"/>
    <property type="match status" value="2"/>
</dbReference>
<dbReference type="HAMAP" id="MF_00484">
    <property type="entry name" value="Glycogen_synth"/>
    <property type="match status" value="1"/>
</dbReference>
<dbReference type="InterPro" id="IPR001296">
    <property type="entry name" value="Glyco_trans_1"/>
</dbReference>
<dbReference type="InterPro" id="IPR011835">
    <property type="entry name" value="GS/SS"/>
</dbReference>
<dbReference type="InterPro" id="IPR013534">
    <property type="entry name" value="Starch_synth_cat_dom"/>
</dbReference>
<dbReference type="NCBIfam" id="TIGR02095">
    <property type="entry name" value="glgA"/>
    <property type="match status" value="1"/>
</dbReference>
<dbReference type="NCBIfam" id="NF001898">
    <property type="entry name" value="PRK00654.1-1"/>
    <property type="match status" value="1"/>
</dbReference>
<dbReference type="PANTHER" id="PTHR45825:SF11">
    <property type="entry name" value="ALPHA AMYLASE DOMAIN-CONTAINING PROTEIN"/>
    <property type="match status" value="1"/>
</dbReference>
<dbReference type="PANTHER" id="PTHR45825">
    <property type="entry name" value="GRANULE-BOUND STARCH SYNTHASE 1, CHLOROPLASTIC/AMYLOPLASTIC"/>
    <property type="match status" value="1"/>
</dbReference>
<dbReference type="Pfam" id="PF08323">
    <property type="entry name" value="Glyco_transf_5"/>
    <property type="match status" value="1"/>
</dbReference>
<dbReference type="Pfam" id="PF00534">
    <property type="entry name" value="Glycos_transf_1"/>
    <property type="match status" value="1"/>
</dbReference>
<dbReference type="SUPFAM" id="SSF53756">
    <property type="entry name" value="UDP-Glycosyltransferase/glycogen phosphorylase"/>
    <property type="match status" value="1"/>
</dbReference>
<sequence length="477" mass="53984">MKILFVAAEGAPFSKTGGLGDVIGALPKSLVKAGHEVAVILPYYDMVEAKFGNQIEDVLHFEVSVGWRRQYCGIKKTVLNGVTFYFIDNQYYFFRGHVYGDFDDGERFAFFQLAAIEAMERIDFIPDLLHVHDYHTAMIPFLLKEKYCWIQAYEDIETVLTIHNLEFQGQFSEGMLGDLFGVGLERYADGTLRWNNCLNWMKAGILYANRVSTVSPSYAHEIMTSQFGCNLDQILKMESGKVSGIVNGIDADLYNPQTDALLDYHFNQEDLSGKAKNKAKLQERVGLPVRADVPLVGIVSRLTRQKGFDVVVESLHHILQEDVQIVLLGTGDPAFEGAFSWFAQIYPGKLSANITFDVKLAQEIYAACDLFLMPSRFEPCGLSQMMAMRYGTLPLVHEVGGLRDTVRAFNPIEGSGTGFSFDNLSPYWLNWTFQTALDLYRNHPDIWRNLQKQAMESDFSWDTACKSYLDLYHSLVN</sequence>
<proteinExistence type="inferred from homology"/>
<comment type="function">
    <text evidence="1">Synthesizes alpha-1,4-glucan chains using ADP-glucose.</text>
</comment>
<comment type="catalytic activity">
    <reaction evidence="1">
        <text>[(1-&gt;4)-alpha-D-glucosyl](n) + ADP-alpha-D-glucose = [(1-&gt;4)-alpha-D-glucosyl](n+1) + ADP + H(+)</text>
        <dbReference type="Rhea" id="RHEA:18189"/>
        <dbReference type="Rhea" id="RHEA-COMP:9584"/>
        <dbReference type="Rhea" id="RHEA-COMP:9587"/>
        <dbReference type="ChEBI" id="CHEBI:15378"/>
        <dbReference type="ChEBI" id="CHEBI:15444"/>
        <dbReference type="ChEBI" id="CHEBI:57498"/>
        <dbReference type="ChEBI" id="CHEBI:456216"/>
        <dbReference type="EC" id="2.4.1.21"/>
    </reaction>
</comment>
<comment type="pathway">
    <text evidence="1">Glycan biosynthesis; glycogen biosynthesis.</text>
</comment>
<comment type="similarity">
    <text evidence="1">Belongs to the glycosyltransferase 1 family. Bacterial/plant glycogen synthase subfamily.</text>
</comment>
<name>GLGA_STRPJ</name>
<protein>
    <recommendedName>
        <fullName evidence="1">Glycogen synthase</fullName>
        <ecNumber evidence="1">2.4.1.21</ecNumber>
    </recommendedName>
    <alternativeName>
        <fullName evidence="1">Starch [bacterial glycogen] synthase</fullName>
    </alternativeName>
</protein>
<accession>B8ZPW5</accession>
<gene>
    <name evidence="1" type="primary">glgA</name>
    <name type="ordered locus">SPN23F10440</name>
</gene>
<feature type="chain" id="PRO_1000190085" description="Glycogen synthase">
    <location>
        <begin position="1"/>
        <end position="477"/>
    </location>
</feature>
<feature type="binding site" evidence="1">
    <location>
        <position position="15"/>
    </location>
    <ligand>
        <name>ADP-alpha-D-glucose</name>
        <dbReference type="ChEBI" id="CHEBI:57498"/>
    </ligand>
</feature>
<evidence type="ECO:0000255" key="1">
    <source>
        <dbReference type="HAMAP-Rule" id="MF_00484"/>
    </source>
</evidence>
<organism>
    <name type="scientific">Streptococcus pneumoniae (strain ATCC 700669 / Spain 23F-1)</name>
    <dbReference type="NCBI Taxonomy" id="561276"/>
    <lineage>
        <taxon>Bacteria</taxon>
        <taxon>Bacillati</taxon>
        <taxon>Bacillota</taxon>
        <taxon>Bacilli</taxon>
        <taxon>Lactobacillales</taxon>
        <taxon>Streptococcaceae</taxon>
        <taxon>Streptococcus</taxon>
    </lineage>
</organism>
<reference key="1">
    <citation type="journal article" date="2009" name="J. Bacteriol.">
        <title>Role of conjugative elements in the evolution of the multidrug-resistant pandemic clone Streptococcus pneumoniae Spain23F ST81.</title>
        <authorList>
            <person name="Croucher N.J."/>
            <person name="Walker D."/>
            <person name="Romero P."/>
            <person name="Lennard N."/>
            <person name="Paterson G.K."/>
            <person name="Bason N.C."/>
            <person name="Mitchell A.M."/>
            <person name="Quail M.A."/>
            <person name="Andrew P.W."/>
            <person name="Parkhill J."/>
            <person name="Bentley S.D."/>
            <person name="Mitchell T.J."/>
        </authorList>
    </citation>
    <scope>NUCLEOTIDE SEQUENCE [LARGE SCALE GENOMIC DNA]</scope>
    <source>
        <strain>ATCC 700669 / Spain 23F-1</strain>
    </source>
</reference>
<keyword id="KW-0320">Glycogen biosynthesis</keyword>
<keyword id="KW-0328">Glycosyltransferase</keyword>
<keyword id="KW-0808">Transferase</keyword>